<keyword id="KW-0186">Copper</keyword>
<keyword id="KW-0249">Electron transport</keyword>
<keyword id="KW-0460">Magnesium</keyword>
<keyword id="KW-0472">Membrane</keyword>
<keyword id="KW-0479">Metal-binding</keyword>
<keyword id="KW-0496">Mitochondrion</keyword>
<keyword id="KW-0999">Mitochondrion inner membrane</keyword>
<keyword id="KW-0679">Respiratory chain</keyword>
<keyword id="KW-1278">Translocase</keyword>
<keyword id="KW-0812">Transmembrane</keyword>
<keyword id="KW-1133">Transmembrane helix</keyword>
<keyword id="KW-0813">Transport</keyword>
<proteinExistence type="inferred from homology"/>
<sequence>MAHATQVGLQDATSPIMEELISFHDHALMIIFLISFLVLYALFLTLTTKLTNTNITDAQEMETVWTILPAIILVLIALPSLRILYLTDEINDPSFTIKAIGHQWYWAYEYTDYGGLIFNSYMLPPLFLEPGDLRLLEVDNRVVLPIEAPVRMMITSQDVLHSWTVPSLGLKTDAIPGRLNQTTFTATRPGVYYGQCSEICGANHSFMPIVLELIPLKIFEMGPVFTL</sequence>
<dbReference type="EC" id="7.1.1.9"/>
<dbReference type="EMBL" id="X99256">
    <property type="protein sequence ID" value="CAA67631.1"/>
    <property type="molecule type" value="Genomic_DNA"/>
</dbReference>
<dbReference type="PIR" id="T11836">
    <property type="entry name" value="T11836"/>
</dbReference>
<dbReference type="RefSeq" id="NP_007825.1">
    <property type="nucleotide sequence ID" value="NC_002082.1"/>
</dbReference>
<dbReference type="SMR" id="Q96127"/>
<dbReference type="GeneID" id="808466"/>
<dbReference type="CTD" id="4513"/>
<dbReference type="GO" id="GO:0005743">
    <property type="term" value="C:mitochondrial inner membrane"/>
    <property type="evidence" value="ECO:0007669"/>
    <property type="project" value="UniProtKB-SubCell"/>
</dbReference>
<dbReference type="GO" id="GO:0005739">
    <property type="term" value="C:mitochondrion"/>
    <property type="evidence" value="ECO:0000250"/>
    <property type="project" value="UniProtKB"/>
</dbReference>
<dbReference type="GO" id="GO:0045277">
    <property type="term" value="C:respiratory chain complex IV"/>
    <property type="evidence" value="ECO:0000250"/>
    <property type="project" value="UniProtKB"/>
</dbReference>
<dbReference type="GO" id="GO:0005507">
    <property type="term" value="F:copper ion binding"/>
    <property type="evidence" value="ECO:0007669"/>
    <property type="project" value="InterPro"/>
</dbReference>
<dbReference type="GO" id="GO:0004129">
    <property type="term" value="F:cytochrome-c oxidase activity"/>
    <property type="evidence" value="ECO:0007669"/>
    <property type="project" value="UniProtKB-EC"/>
</dbReference>
<dbReference type="GO" id="GO:0042773">
    <property type="term" value="P:ATP synthesis coupled electron transport"/>
    <property type="evidence" value="ECO:0007669"/>
    <property type="project" value="TreeGrafter"/>
</dbReference>
<dbReference type="CDD" id="cd13912">
    <property type="entry name" value="CcO_II_C"/>
    <property type="match status" value="1"/>
</dbReference>
<dbReference type="FunFam" id="1.10.287.90:FF:000001">
    <property type="entry name" value="Cytochrome c oxidase subunit 2"/>
    <property type="match status" value="1"/>
</dbReference>
<dbReference type="FunFam" id="2.60.40.420:FF:000001">
    <property type="entry name" value="Cytochrome c oxidase subunit 2"/>
    <property type="match status" value="1"/>
</dbReference>
<dbReference type="Gene3D" id="1.10.287.90">
    <property type="match status" value="1"/>
</dbReference>
<dbReference type="Gene3D" id="2.60.40.420">
    <property type="entry name" value="Cupredoxins - blue copper proteins"/>
    <property type="match status" value="1"/>
</dbReference>
<dbReference type="InterPro" id="IPR045187">
    <property type="entry name" value="CcO_II"/>
</dbReference>
<dbReference type="InterPro" id="IPR002429">
    <property type="entry name" value="CcO_II-like_C"/>
</dbReference>
<dbReference type="InterPro" id="IPR034210">
    <property type="entry name" value="CcO_II_C"/>
</dbReference>
<dbReference type="InterPro" id="IPR001505">
    <property type="entry name" value="Copper_CuA"/>
</dbReference>
<dbReference type="InterPro" id="IPR008972">
    <property type="entry name" value="Cupredoxin"/>
</dbReference>
<dbReference type="InterPro" id="IPR014222">
    <property type="entry name" value="Cyt_c_oxidase_su2"/>
</dbReference>
<dbReference type="InterPro" id="IPR011759">
    <property type="entry name" value="Cyt_c_oxidase_su2_TM_dom"/>
</dbReference>
<dbReference type="InterPro" id="IPR036257">
    <property type="entry name" value="Cyt_c_oxidase_su2_TM_sf"/>
</dbReference>
<dbReference type="NCBIfam" id="TIGR02866">
    <property type="entry name" value="CoxB"/>
    <property type="match status" value="1"/>
</dbReference>
<dbReference type="PANTHER" id="PTHR22888:SF9">
    <property type="entry name" value="CYTOCHROME C OXIDASE SUBUNIT 2"/>
    <property type="match status" value="1"/>
</dbReference>
<dbReference type="PANTHER" id="PTHR22888">
    <property type="entry name" value="CYTOCHROME C OXIDASE, SUBUNIT II"/>
    <property type="match status" value="1"/>
</dbReference>
<dbReference type="Pfam" id="PF00116">
    <property type="entry name" value="COX2"/>
    <property type="match status" value="1"/>
</dbReference>
<dbReference type="Pfam" id="PF02790">
    <property type="entry name" value="COX2_TM"/>
    <property type="match status" value="1"/>
</dbReference>
<dbReference type="PRINTS" id="PR01166">
    <property type="entry name" value="CYCOXIDASEII"/>
</dbReference>
<dbReference type="SUPFAM" id="SSF49503">
    <property type="entry name" value="Cupredoxins"/>
    <property type="match status" value="1"/>
</dbReference>
<dbReference type="SUPFAM" id="SSF81464">
    <property type="entry name" value="Cytochrome c oxidase subunit II-like, transmembrane region"/>
    <property type="match status" value="1"/>
</dbReference>
<dbReference type="PROSITE" id="PS00078">
    <property type="entry name" value="COX2"/>
    <property type="match status" value="1"/>
</dbReference>
<dbReference type="PROSITE" id="PS50857">
    <property type="entry name" value="COX2_CUA"/>
    <property type="match status" value="1"/>
</dbReference>
<dbReference type="PROSITE" id="PS50999">
    <property type="entry name" value="COX2_TM"/>
    <property type="match status" value="1"/>
</dbReference>
<gene>
    <name type="primary">MT-CO2</name>
    <name type="synonym">COII</name>
    <name type="synonym">COX2</name>
    <name type="synonym">COXII</name>
    <name type="synonym">MTCO2</name>
</gene>
<organism>
    <name type="scientific">Hylobates lar</name>
    <name type="common">Lar gibbon</name>
    <name type="synonym">White-handed gibbon</name>
    <dbReference type="NCBI Taxonomy" id="9580"/>
    <lineage>
        <taxon>Eukaryota</taxon>
        <taxon>Metazoa</taxon>
        <taxon>Chordata</taxon>
        <taxon>Craniata</taxon>
        <taxon>Vertebrata</taxon>
        <taxon>Euteleostomi</taxon>
        <taxon>Mammalia</taxon>
        <taxon>Eutheria</taxon>
        <taxon>Euarchontoglires</taxon>
        <taxon>Primates</taxon>
        <taxon>Haplorrhini</taxon>
        <taxon>Catarrhini</taxon>
        <taxon>Hylobatidae</taxon>
        <taxon>Hylobates</taxon>
    </lineage>
</organism>
<geneLocation type="mitochondrion"/>
<name>COX2_HYLLA</name>
<evidence type="ECO:0000250" key="1">
    <source>
        <dbReference type="UniProtKB" id="P00403"/>
    </source>
</evidence>
<evidence type="ECO:0000250" key="2">
    <source>
        <dbReference type="UniProtKB" id="P00410"/>
    </source>
</evidence>
<evidence type="ECO:0000250" key="3">
    <source>
        <dbReference type="UniProtKB" id="P68530"/>
    </source>
</evidence>
<evidence type="ECO:0000305" key="4"/>
<accession>Q96127</accession>
<protein>
    <recommendedName>
        <fullName>Cytochrome c oxidase subunit 2</fullName>
        <ecNumber>7.1.1.9</ecNumber>
    </recommendedName>
    <alternativeName>
        <fullName>Cytochrome c oxidase polypeptide II</fullName>
    </alternativeName>
</protein>
<reference key="1">
    <citation type="journal article" date="1996" name="Hereditas">
        <title>A complete mitochondrial DNA molecule of the white-handed gibbon, Hylobates lar, and comparison among individual mitochondrial genes of all hominoid genera.</title>
        <authorList>
            <person name="Arnason U."/>
            <person name="Gullberg A."/>
            <person name="Xu X."/>
        </authorList>
    </citation>
    <scope>NUCLEOTIDE SEQUENCE [GENOMIC DNA]</scope>
    <source>
        <strain>Isolate Ester</strain>
    </source>
</reference>
<feature type="chain" id="PRO_0000183611" description="Cytochrome c oxidase subunit 2">
    <location>
        <begin position="1"/>
        <end position="227"/>
    </location>
</feature>
<feature type="topological domain" description="Mitochondrial intermembrane" evidence="3">
    <location>
        <begin position="1"/>
        <end position="14"/>
    </location>
</feature>
<feature type="transmembrane region" description="Helical; Name=I" evidence="3">
    <location>
        <begin position="15"/>
        <end position="45"/>
    </location>
</feature>
<feature type="topological domain" description="Mitochondrial matrix" evidence="3">
    <location>
        <begin position="46"/>
        <end position="59"/>
    </location>
</feature>
<feature type="transmembrane region" description="Helical; Name=II" evidence="3">
    <location>
        <begin position="60"/>
        <end position="87"/>
    </location>
</feature>
<feature type="topological domain" description="Mitochondrial intermembrane" evidence="3">
    <location>
        <begin position="88"/>
        <end position="227"/>
    </location>
</feature>
<feature type="binding site" evidence="3">
    <location>
        <position position="161"/>
    </location>
    <ligand>
        <name>Cu cation</name>
        <dbReference type="ChEBI" id="CHEBI:23378"/>
        <label>A1</label>
    </ligand>
</feature>
<feature type="binding site" evidence="3">
    <location>
        <position position="196"/>
    </location>
    <ligand>
        <name>Cu cation</name>
        <dbReference type="ChEBI" id="CHEBI:23378"/>
        <label>A1</label>
    </ligand>
</feature>
<feature type="binding site" evidence="3">
    <location>
        <position position="196"/>
    </location>
    <ligand>
        <name>Cu cation</name>
        <dbReference type="ChEBI" id="CHEBI:23378"/>
        <label>A2</label>
    </ligand>
</feature>
<feature type="binding site" evidence="3">
    <location>
        <position position="198"/>
    </location>
    <ligand>
        <name>Cu cation</name>
        <dbReference type="ChEBI" id="CHEBI:23378"/>
        <label>A2</label>
    </ligand>
</feature>
<feature type="binding site" evidence="3">
    <location>
        <position position="198"/>
    </location>
    <ligand>
        <name>Mg(2+)</name>
        <dbReference type="ChEBI" id="CHEBI:18420"/>
        <note>ligand shared with MT-CO1</note>
    </ligand>
</feature>
<feature type="binding site" evidence="3">
    <location>
        <position position="200"/>
    </location>
    <ligand>
        <name>Cu cation</name>
        <dbReference type="ChEBI" id="CHEBI:23378"/>
        <label>A1</label>
    </ligand>
</feature>
<feature type="binding site" evidence="3">
    <location>
        <position position="200"/>
    </location>
    <ligand>
        <name>Cu cation</name>
        <dbReference type="ChEBI" id="CHEBI:23378"/>
        <label>A2</label>
    </ligand>
</feature>
<feature type="binding site" evidence="3">
    <location>
        <position position="204"/>
    </location>
    <ligand>
        <name>Cu cation</name>
        <dbReference type="ChEBI" id="CHEBI:23378"/>
        <label>A2</label>
    </ligand>
</feature>
<feature type="binding site" evidence="3">
    <location>
        <position position="207"/>
    </location>
    <ligand>
        <name>Cu cation</name>
        <dbReference type="ChEBI" id="CHEBI:23378"/>
        <label>A1</label>
    </ligand>
</feature>
<comment type="function">
    <text evidence="2">Component of the cytochrome c oxidase, the last enzyme in the mitochondrial electron transport chain which drives oxidative phosphorylation. The respiratory chain contains 3 multisubunit complexes succinate dehydrogenase (complex II, CII), ubiquinol-cytochrome c oxidoreductase (cytochrome b-c1 complex, complex III, CIII) and cytochrome c oxidase (complex IV, CIV), that cooperate to transfer electrons derived from NADH and succinate to molecular oxygen, creating an electrochemical gradient over the inner membrane that drives transmembrane transport and the ATP synthase. Cytochrome c oxidase is the component of the respiratory chain that catalyzes the reduction of oxygen to water. Electrons originating from reduced cytochrome c in the intermembrane space (IMS) are transferred via the dinuclear copper A center (CU(A)) of subunit 2 and heme A of subunit 1 to the active site in subunit 1, a binuclear center (BNC) formed by heme A3 and copper B (CU(B)). The BNC reduces molecular oxygen to 2 water molecules using 4 electrons from cytochrome c in the IMS and 4 protons from the mitochondrial matrix.</text>
</comment>
<comment type="catalytic activity">
    <reaction evidence="2">
        <text>4 Fe(II)-[cytochrome c] + O2 + 8 H(+)(in) = 4 Fe(III)-[cytochrome c] + 2 H2O + 4 H(+)(out)</text>
        <dbReference type="Rhea" id="RHEA:11436"/>
        <dbReference type="Rhea" id="RHEA-COMP:10350"/>
        <dbReference type="Rhea" id="RHEA-COMP:14399"/>
        <dbReference type="ChEBI" id="CHEBI:15377"/>
        <dbReference type="ChEBI" id="CHEBI:15378"/>
        <dbReference type="ChEBI" id="CHEBI:15379"/>
        <dbReference type="ChEBI" id="CHEBI:29033"/>
        <dbReference type="ChEBI" id="CHEBI:29034"/>
        <dbReference type="EC" id="7.1.1.9"/>
    </reaction>
    <physiologicalReaction direction="left-to-right" evidence="2">
        <dbReference type="Rhea" id="RHEA:11437"/>
    </physiologicalReaction>
</comment>
<comment type="cofactor">
    <cofactor evidence="3">
        <name>Cu cation</name>
        <dbReference type="ChEBI" id="CHEBI:23378"/>
    </cofactor>
    <text evidence="3">Binds a dinuclear copper A center per subunit.</text>
</comment>
<comment type="subunit">
    <text evidence="1 3">Component of the cytochrome c oxidase (complex IV, CIV), a multisubunit enzyme composed of 14 subunits. The complex is composed of a catalytic core of 3 subunits MT-CO1, MT-CO2 and MT-CO3, encoded in the mitochondrial DNA, and 11 supernumerary subunits COX4I, COX5A, COX5B, COX6A, COX6B, COX6C, COX7A, COX7B, COX7C, COX8 and NDUFA4, which are encoded in the nuclear genome. The complex exists as a monomer or a dimer and forms supercomplexes (SCs) in the inner mitochondrial membrane with NADH-ubiquinone oxidoreductase (complex I, CI) and ubiquinol-cytochrome c oxidoreductase (cytochrome b-c1 complex, complex III, CIII), resulting in different assemblies (supercomplex SCI(1)III(2)IV(1) and megacomplex MCI(2)III(2)IV(2)) (By similarity). Found in a complex with TMEM177, COA6, COX18, COX20, SCO1 and SCO2. Interacts with TMEM177 in a COX20-dependent manner. Interacts with COX20. Interacts with COX16 (By similarity).</text>
</comment>
<comment type="subcellular location">
    <subcellularLocation>
        <location evidence="3">Mitochondrion inner membrane</location>
        <topology evidence="3">Multi-pass membrane protein</topology>
    </subcellularLocation>
</comment>
<comment type="similarity">
    <text evidence="4">Belongs to the cytochrome c oxidase subunit 2 family.</text>
</comment>